<dbReference type="EMBL" id="AF435936">
    <property type="protein sequence ID" value="AAL35570.1"/>
    <property type="molecule type" value="Genomic_DNA"/>
</dbReference>
<dbReference type="GO" id="GO:0000786">
    <property type="term" value="C:nucleosome"/>
    <property type="evidence" value="ECO:0007669"/>
    <property type="project" value="UniProtKB-KW"/>
</dbReference>
<dbReference type="GO" id="GO:0005634">
    <property type="term" value="C:nucleus"/>
    <property type="evidence" value="ECO:0007669"/>
    <property type="project" value="UniProtKB-SubCell"/>
</dbReference>
<dbReference type="GO" id="GO:0003677">
    <property type="term" value="F:DNA binding"/>
    <property type="evidence" value="ECO:0007669"/>
    <property type="project" value="UniProtKB-KW"/>
</dbReference>
<dbReference type="GO" id="GO:0030261">
    <property type="term" value="P:chromosome condensation"/>
    <property type="evidence" value="ECO:0007669"/>
    <property type="project" value="UniProtKB-KW"/>
</dbReference>
<dbReference type="GO" id="GO:0035092">
    <property type="term" value="P:sperm DNA condensation"/>
    <property type="evidence" value="ECO:0007669"/>
    <property type="project" value="InterPro"/>
</dbReference>
<dbReference type="InterPro" id="IPR000221">
    <property type="entry name" value="Protamine_P1"/>
</dbReference>
<dbReference type="Pfam" id="PF00260">
    <property type="entry name" value="Protamine_P1"/>
    <property type="match status" value="1"/>
</dbReference>
<dbReference type="PROSITE" id="PS00048">
    <property type="entry name" value="PROTAMINE_P1"/>
    <property type="match status" value="1"/>
</dbReference>
<reference key="1">
    <citation type="journal article" date="2002" name="Mol. Phylogenet. Evol.">
        <title>Characterization and phylogenetic utility of the mammalian protamine P1 gene.</title>
        <authorList>
            <person name="Van Den Bussche R.A."/>
            <person name="Hoofer S.R."/>
            <person name="Hansen E.W."/>
        </authorList>
    </citation>
    <scope>NUCLEOTIDE SEQUENCE [GENOMIC DNA]</scope>
</reference>
<keyword id="KW-0158">Chromosome</keyword>
<keyword id="KW-0217">Developmental protein</keyword>
<keyword id="KW-0221">Differentiation</keyword>
<keyword id="KW-0226">DNA condensation</keyword>
<keyword id="KW-0238">DNA-binding</keyword>
<keyword id="KW-0544">Nucleosome core</keyword>
<keyword id="KW-0539">Nucleus</keyword>
<keyword id="KW-0744">Spermatogenesis</keyword>
<name>HSP1_CHIMC</name>
<comment type="function">
    <text evidence="1">Protamines substitute for histones in the chromatin of sperm during the haploid phase of spermatogenesis. They compact sperm DNA into a highly condensed, stable and inactive complex (By similarity).</text>
</comment>
<comment type="subcellular location">
    <subcellularLocation>
        <location evidence="1">Nucleus</location>
    </subcellularLocation>
    <subcellularLocation>
        <location evidence="1">Chromosome</location>
    </subcellularLocation>
</comment>
<comment type="tissue specificity">
    <text>Testis.</text>
</comment>
<comment type="similarity">
    <text evidence="2">Belongs to the protamine P1 family.</text>
</comment>
<organism>
    <name type="scientific">Chilonatalus micropus</name>
    <name type="common">Cuban funnel-eared bat</name>
    <name type="synonym">Natalus micropus</name>
    <dbReference type="NCBI Taxonomy" id="155039"/>
    <lineage>
        <taxon>Eukaryota</taxon>
        <taxon>Metazoa</taxon>
        <taxon>Chordata</taxon>
        <taxon>Craniata</taxon>
        <taxon>Vertebrata</taxon>
        <taxon>Euteleostomi</taxon>
        <taxon>Mammalia</taxon>
        <taxon>Eutheria</taxon>
        <taxon>Laurasiatheria</taxon>
        <taxon>Chiroptera</taxon>
        <taxon>Yangochiroptera</taxon>
        <taxon>Natalidae</taxon>
        <taxon>Chilonatalus</taxon>
    </lineage>
</organism>
<evidence type="ECO:0000250" key="1"/>
<evidence type="ECO:0000305" key="2"/>
<proteinExistence type="evidence at transcript level"/>
<protein>
    <recommendedName>
        <fullName>Sperm protamine P1</fullName>
    </recommendedName>
</protein>
<gene>
    <name type="primary">PRM1</name>
</gene>
<feature type="chain" id="PRO_0000191507" description="Sperm protamine P1">
    <location>
        <begin position="1"/>
        <end position="50"/>
    </location>
</feature>
<sequence length="50" mass="6737">MARYRCCRSQSRSRCRRRRRRCRTRRRRCCRRRRRRVCCRRYTVVRCRRR</sequence>
<accession>Q8WNZ4</accession>